<keyword id="KW-0017">Alkaloid metabolism</keyword>
<keyword id="KW-0256">Endoplasmic reticulum</keyword>
<keyword id="KW-0325">Glycoprotein</keyword>
<keyword id="KW-0349">Heme</keyword>
<keyword id="KW-0408">Iron</keyword>
<keyword id="KW-0472">Membrane</keyword>
<keyword id="KW-0479">Metal-binding</keyword>
<keyword id="KW-0503">Monooxygenase</keyword>
<keyword id="KW-0560">Oxidoreductase</keyword>
<keyword id="KW-0812">Transmembrane</keyword>
<keyword id="KW-1133">Transmembrane helix</keyword>
<name>TEX2_CATRO</name>
<reference key="1">
    <citation type="journal article" date="2018" name="Plant Physiol.">
        <title>Two tabersonine 6,7-epoxidases initiate lochnericine-derived alkaloid biosynthesis in Catharanthus roseus.</title>
        <authorList>
            <person name="Carqueijeiro I.T."/>
            <person name="Brown S."/>
            <person name="Chung K."/>
            <person name="Dang T.-T."/>
            <person name="Walia M."/>
            <person name="Besseau S."/>
            <person name="Duge de Bernonville T."/>
            <person name="Oudin A."/>
            <person name="Lanoue A."/>
            <person name="Billet K."/>
            <person name="Munsch T."/>
            <person name="Koudounas K."/>
            <person name="Melin C."/>
            <person name="Godon C."/>
            <person name="Razafimandimby B."/>
            <person name="de Craene J.-O."/>
            <person name="Glevarec G."/>
            <person name="Marc J."/>
            <person name="Giglioli-Guivarc'h N."/>
            <person name="Clastre M."/>
            <person name="St-Pierre B."/>
            <person name="Papon N."/>
            <person name="Andrade R.B."/>
            <person name="O'Connor S.E."/>
            <person name="Courdavault V."/>
        </authorList>
    </citation>
    <scope>NUCLEOTIDE SEQUENCE [MRNA]</scope>
    <scope>FUNCTION</scope>
    <scope>CATALYTIC ACTIVITY</scope>
    <scope>TISSUE SPECIFICITY</scope>
    <scope>BIOPHYSICOCHEMICAL PROPERTIES</scope>
    <scope>SUBCELLULAR LOCATION</scope>
</reference>
<reference key="2">
    <citation type="journal article" date="2019" name="Plant J.">
        <title>The assembly of (+)-vincadifformine- and (-)-tabersonine-derived monoterpenoid indole alkaloids in Catharanthus roseus involves separate branch pathways.</title>
        <authorList>
            <person name="Williams D."/>
            <person name="Qu Y."/>
            <person name="Simionescu R."/>
            <person name="De Luca V."/>
        </authorList>
    </citation>
    <scope>FUNCTION</scope>
    <scope>CATALYTIC ACTIVITY</scope>
    <scope>PATHWAY</scope>
</reference>
<accession>A0A343URW7</accession>
<dbReference type="EC" id="1.14.14.-" evidence="4 5"/>
<dbReference type="EMBL" id="MG873081">
    <property type="protein sequence ID" value="AVH80641.1"/>
    <property type="molecule type" value="mRNA"/>
</dbReference>
<dbReference type="SMR" id="A0A343URW7"/>
<dbReference type="GlyCosmos" id="A0A343URW7">
    <property type="glycosylation" value="3 sites, No reported glycans"/>
</dbReference>
<dbReference type="SABIO-RK" id="A0A343URW7"/>
<dbReference type="GO" id="GO:0005789">
    <property type="term" value="C:endoplasmic reticulum membrane"/>
    <property type="evidence" value="ECO:0000314"/>
    <property type="project" value="UniProtKB"/>
</dbReference>
<dbReference type="GO" id="GO:0020037">
    <property type="term" value="F:heme binding"/>
    <property type="evidence" value="ECO:0007669"/>
    <property type="project" value="InterPro"/>
</dbReference>
<dbReference type="GO" id="GO:0005506">
    <property type="term" value="F:iron ion binding"/>
    <property type="evidence" value="ECO:0007669"/>
    <property type="project" value="InterPro"/>
</dbReference>
<dbReference type="GO" id="GO:0004497">
    <property type="term" value="F:monooxygenase activity"/>
    <property type="evidence" value="ECO:0000314"/>
    <property type="project" value="UniProtKB"/>
</dbReference>
<dbReference type="GO" id="GO:0016705">
    <property type="term" value="F:oxidoreductase activity, acting on paired donors, with incorporation or reduction of molecular oxygen"/>
    <property type="evidence" value="ECO:0007669"/>
    <property type="project" value="InterPro"/>
</dbReference>
<dbReference type="GO" id="GO:0035835">
    <property type="term" value="P:indole alkaloid biosynthetic process"/>
    <property type="evidence" value="ECO:0000314"/>
    <property type="project" value="UniProtKB"/>
</dbReference>
<dbReference type="CDD" id="cd11072">
    <property type="entry name" value="CYP71-like"/>
    <property type="match status" value="1"/>
</dbReference>
<dbReference type="FunFam" id="1.10.630.10:FF:000043">
    <property type="entry name" value="Cytochrome P450 99A2"/>
    <property type="match status" value="1"/>
</dbReference>
<dbReference type="Gene3D" id="1.10.630.10">
    <property type="entry name" value="Cytochrome P450"/>
    <property type="match status" value="1"/>
</dbReference>
<dbReference type="InterPro" id="IPR001128">
    <property type="entry name" value="Cyt_P450"/>
</dbReference>
<dbReference type="InterPro" id="IPR017972">
    <property type="entry name" value="Cyt_P450_CS"/>
</dbReference>
<dbReference type="InterPro" id="IPR002401">
    <property type="entry name" value="Cyt_P450_E_grp-I"/>
</dbReference>
<dbReference type="InterPro" id="IPR036396">
    <property type="entry name" value="Cyt_P450_sf"/>
</dbReference>
<dbReference type="PANTHER" id="PTHR47955:SF8">
    <property type="entry name" value="CYTOCHROME P450 71D11-LIKE"/>
    <property type="match status" value="1"/>
</dbReference>
<dbReference type="PANTHER" id="PTHR47955">
    <property type="entry name" value="CYTOCHROME P450 FAMILY 71 PROTEIN"/>
    <property type="match status" value="1"/>
</dbReference>
<dbReference type="Pfam" id="PF00067">
    <property type="entry name" value="p450"/>
    <property type="match status" value="1"/>
</dbReference>
<dbReference type="PRINTS" id="PR00463">
    <property type="entry name" value="EP450I"/>
</dbReference>
<dbReference type="PRINTS" id="PR00385">
    <property type="entry name" value="P450"/>
</dbReference>
<dbReference type="SUPFAM" id="SSF48264">
    <property type="entry name" value="Cytochrome P450"/>
    <property type="match status" value="1"/>
</dbReference>
<dbReference type="PROSITE" id="PS00086">
    <property type="entry name" value="CYTOCHROME_P450"/>
    <property type="match status" value="1"/>
</dbReference>
<protein>
    <recommendedName>
        <fullName evidence="6 7">Tabersonine 6,7-epoxidase isoform 2</fullName>
        <ecNumber evidence="4 5">1.14.14.-</ecNumber>
    </recommendedName>
    <alternativeName>
        <fullName evidence="6 7">Cytochrome P450 71D347</fullName>
    </alternativeName>
</protein>
<comment type="function">
    <text evidence="4 5">Component of the monoterpenoid indole alkaloids (MIAs, e.g. echitovenine, tabersonine, lochnericine, 19-hydroxytabersonine and horhammericine) biosynthetic pathway; MIAs are used in cancer treatment and other medical applications (PubMed:31009114). Cytochrome P450 catalyzing the conversion of tabersonine to lochnericine (PubMed:29934299, PubMed:31009114).</text>
</comment>
<comment type="catalytic activity">
    <reaction evidence="4 5">
        <text>(-)-tabersonine + reduced [NADPH--hemoprotein reductase] + O2 = lochnericine + oxidized [NADPH--hemoprotein reductase] + H2O + H(+)</text>
        <dbReference type="Rhea" id="RHEA:61056"/>
        <dbReference type="Rhea" id="RHEA-COMP:11964"/>
        <dbReference type="Rhea" id="RHEA-COMP:11965"/>
        <dbReference type="ChEBI" id="CHEBI:15377"/>
        <dbReference type="ChEBI" id="CHEBI:15378"/>
        <dbReference type="ChEBI" id="CHEBI:15379"/>
        <dbReference type="ChEBI" id="CHEBI:57618"/>
        <dbReference type="ChEBI" id="CHEBI:57893"/>
        <dbReference type="ChEBI" id="CHEBI:58210"/>
        <dbReference type="ChEBI" id="CHEBI:144374"/>
    </reaction>
    <physiologicalReaction direction="left-to-right" evidence="4 5">
        <dbReference type="Rhea" id="RHEA:61057"/>
    </physiologicalReaction>
</comment>
<comment type="cofactor">
    <cofactor evidence="1">
        <name>heme</name>
        <dbReference type="ChEBI" id="CHEBI:30413"/>
    </cofactor>
</comment>
<comment type="biophysicochemical properties">
    <kinetics>
        <KM evidence="4">6.45 uM for tabersonine (at pH 8.0 and 30 degrees Celsius)</KM>
        <Vmax evidence="4">0.108 pmol/sec/ug enzyme with tabersonine as substrate (at pH 8.0 and 30 degrees Celsius)</Vmax>
    </kinetics>
</comment>
<comment type="pathway">
    <text evidence="5">Alkaloid biosynthesis.</text>
</comment>
<comment type="subcellular location">
    <subcellularLocation>
        <location evidence="4">Endoplasmic reticulum membrane</location>
        <topology evidence="2">Single-pass membrane protein</topology>
    </subcellularLocation>
</comment>
<comment type="tissue specificity">
    <text evidence="4">Mainly expressed in aerial organs, including stems, leaves and flowers.</text>
</comment>
<comment type="similarity">
    <text evidence="8">Belongs to the cytochrome P450 family.</text>
</comment>
<sequence>MEFVVSPFAFLIFFFILLKMIAKNFKNPKKNTKPLPPGPKKLPIIGNLHQLGGGLAHHILRDLSQNYGPLMHLKIGELSTIVISSTEMAKQVFKVHDIHFSNRPSHILVFKIVSYDYKDIVLSQYGNYWRELRKVCNLHLLSPNRVQSFRFIREDSVLNMMKSISSNEGKVVNLSEMILSLIYGITARAAFGVWSKRHEEFIRLESEIQRLATTFVLADMFPSIKILGALSGLRYKVEKVHKKVDEILEDILKEHRNNNISIEKEEEEEEENNGGKKDLVDVLLDIQKNGEMETPFTDQHIKAIIFDMFSAGTLTSTIAVDWAMAEMMKNPRVMKRAQEEVRNVYNGIGNVNESKLDELKYLQAIIKETLRIHPGTPIVHRETREECEINGYRIPAKARVMVNAWAISRDPNYWPDPDSFKPERFLGSEVDFKGTHFEYTPFGAGRRICPGISYAIANIQLPLAQLLYHFDWKLAGGMKPEELDMAEILGTAAQRKEDLLLIPNSHSCSSLKQQV</sequence>
<organism>
    <name type="scientific">Catharanthus roseus</name>
    <name type="common">Madagascar periwinkle</name>
    <name type="synonym">Vinca rosea</name>
    <dbReference type="NCBI Taxonomy" id="4058"/>
    <lineage>
        <taxon>Eukaryota</taxon>
        <taxon>Viridiplantae</taxon>
        <taxon>Streptophyta</taxon>
        <taxon>Embryophyta</taxon>
        <taxon>Tracheophyta</taxon>
        <taxon>Spermatophyta</taxon>
        <taxon>Magnoliopsida</taxon>
        <taxon>eudicotyledons</taxon>
        <taxon>Gunneridae</taxon>
        <taxon>Pentapetalae</taxon>
        <taxon>asterids</taxon>
        <taxon>lamiids</taxon>
        <taxon>Gentianales</taxon>
        <taxon>Apocynaceae</taxon>
        <taxon>Rauvolfioideae</taxon>
        <taxon>Vinceae</taxon>
        <taxon>Catharanthinae</taxon>
        <taxon>Catharanthus</taxon>
    </lineage>
</organism>
<feature type="chain" id="PRO_0000448558" description="Tabersonine 6,7-epoxidase isoform 2">
    <location>
        <begin position="1"/>
        <end position="515"/>
    </location>
</feature>
<feature type="transmembrane region" description="Helical" evidence="2">
    <location>
        <begin position="1"/>
        <end position="21"/>
    </location>
</feature>
<feature type="binding site" description="axial binding residue" evidence="1">
    <location>
        <position position="449"/>
    </location>
    <ligand>
        <name>heme</name>
        <dbReference type="ChEBI" id="CHEBI:30413"/>
    </ligand>
    <ligandPart>
        <name>Fe</name>
        <dbReference type="ChEBI" id="CHEBI:18248"/>
    </ligandPart>
</feature>
<feature type="glycosylation site" description="N-linked (GlcNAc...) asparagine" evidence="3">
    <location>
        <position position="173"/>
    </location>
</feature>
<feature type="glycosylation site" description="N-linked (GlcNAc...) asparagine" evidence="3">
    <location>
        <position position="259"/>
    </location>
</feature>
<feature type="glycosylation site" description="N-linked (GlcNAc...) asparagine" evidence="3">
    <location>
        <position position="352"/>
    </location>
</feature>
<proteinExistence type="evidence at protein level"/>
<gene>
    <name evidence="6 7" type="primary">TEX2</name>
    <name evidence="6 7" type="synonym">CYP71D347</name>
</gene>
<evidence type="ECO:0000250" key="1">
    <source>
        <dbReference type="UniProtKB" id="Q96242"/>
    </source>
</evidence>
<evidence type="ECO:0000255" key="2"/>
<evidence type="ECO:0000255" key="3">
    <source>
        <dbReference type="PROSITE-ProRule" id="PRU00498"/>
    </source>
</evidence>
<evidence type="ECO:0000269" key="4">
    <source>
    </source>
</evidence>
<evidence type="ECO:0000269" key="5">
    <source>
    </source>
</evidence>
<evidence type="ECO:0000303" key="6">
    <source>
    </source>
</evidence>
<evidence type="ECO:0000303" key="7">
    <source>
    </source>
</evidence>
<evidence type="ECO:0000305" key="8"/>